<proteinExistence type="inferred from homology"/>
<sequence>MEASTTTVKARSTHYICGHAGDSFVKIIYYKDKVKAVVSYLNMNDYLNTYALKCVIPEKITKDFFSSCPDDLLYSTLASIQRGYSPKKKEELGGKWEPLLLLYHRGEEYIIRAVVPQRRCEDCGKQFVSSHQCNVRRREFYHHAVLPDTKTWWKPIKFSPIGALSNAKRLFIIYDIETYTFHSGYGKQLVPYLLVMQFKGDSRLRCEAEKIALECGFQPYRQCFMMLNKARDVIGHKFKDMRVQLQKRAASDIWSRYREKHDILSEEGVSYAQLEAMAKDNLLKTDAEPEFTEIIVVGHNITGFDEIVLASHVLEGLPKDEELQMFKITRNFMPRAGKLLFNDVIMALPNAAFQKPKQSTFQRWKTGDLRPEDLKWEGVRFMVRDTVLLTHSSLRNAAQAYQLEVSKGHCPYDALNQYFMVGTYLCDENMYPAREYWSSDEEYLENKPPDGEKYDLVQKAVDYCVNDVKVTVALVKKLCSGYQQFCDEVLKLDCTFNVFQRPTISSTTHAMFKQMFYKSEPSAVGKFLPNLEAPSEVMYEHIRKSVRGGRCYPSFLGVFTEPHLCYDICGMYASALSHPMPYGPTLSPFDSAVAIAEFQRKLDGQSELSYFDPDIFPMIVVADAFPPSLHCLDVLPPLCSKRSGKLCWTNEPLLGEVLTTVDLIMLKNRGWRVKLIQNAECYAVWREWRPLCREYVSINIAAKEKADREKNQTQRSISKLLSNALYGSFATRLDNKQVVFMDDMSSTTQSELRSGKASIVSMTSVCSRSLPQKDTSFWERYFNLPQVEDSISAELNDEPETEPFIGGERSHVIYKPITFLSAECDNLLLATVQSNSDWVKNDRYATQVASFVLAWSRAFMSEWATILYGEDIGVPYEQRKLKSVYGDTDSLFLTGEGHRLMITKGRHKLKSSGNSLVYRDDGNLAWLVECETSCPSCKSDSFSSESCFLAPKLYALKDTTCPSCGLVSGGKLRAKGHAKSCITYDVLKSCFLDHYLLERPTEQYQSERTPIKRTLANGSANSAPFTVVEKQLARVIRPWNDPTMARGTDLSQGFLLFPYDQKRPNPRPQEPLLENPFWDDSSQTA</sequence>
<evidence type="ECO:0000255" key="1">
    <source>
        <dbReference type="HAMAP-Rule" id="MF_04055"/>
    </source>
</evidence>
<evidence type="ECO:0000256" key="2">
    <source>
        <dbReference type="SAM" id="MobiDB-lite"/>
    </source>
</evidence>
<evidence type="ECO:0000305" key="3"/>
<dbReference type="EC" id="2.7.7.7" evidence="1"/>
<dbReference type="EMBL" id="DQ106414">
    <property type="protein sequence ID" value="AAL89790.2"/>
    <property type="molecule type" value="Genomic_DNA"/>
</dbReference>
<dbReference type="RefSeq" id="YP_001552247.1">
    <property type="nucleotide sequence ID" value="NC_009989.1"/>
</dbReference>
<dbReference type="KEGG" id="vg:10973889"/>
<dbReference type="OrthoDB" id="529at10239"/>
<dbReference type="Proteomes" id="UP000136605">
    <property type="component" value="Genome"/>
</dbReference>
<dbReference type="GO" id="GO:0042025">
    <property type="term" value="C:host cell nucleus"/>
    <property type="evidence" value="ECO:0007669"/>
    <property type="project" value="UniProtKB-SubCell"/>
</dbReference>
<dbReference type="GO" id="GO:0008408">
    <property type="term" value="F:3'-5' exonuclease activity"/>
    <property type="evidence" value="ECO:0007669"/>
    <property type="project" value="UniProtKB-UniRule"/>
</dbReference>
<dbReference type="GO" id="GO:0003677">
    <property type="term" value="F:DNA binding"/>
    <property type="evidence" value="ECO:0007669"/>
    <property type="project" value="UniProtKB-UniRule"/>
</dbReference>
<dbReference type="GO" id="GO:0003887">
    <property type="term" value="F:DNA-directed DNA polymerase activity"/>
    <property type="evidence" value="ECO:0007669"/>
    <property type="project" value="UniProtKB-UniRule"/>
</dbReference>
<dbReference type="GO" id="GO:0000166">
    <property type="term" value="F:nucleotide binding"/>
    <property type="evidence" value="ECO:0007669"/>
    <property type="project" value="UniProtKB-UniRule"/>
</dbReference>
<dbReference type="GO" id="GO:0006261">
    <property type="term" value="P:DNA-templated DNA replication"/>
    <property type="evidence" value="ECO:0007669"/>
    <property type="project" value="UniProtKB-UniRule"/>
</dbReference>
<dbReference type="GO" id="GO:0039693">
    <property type="term" value="P:viral DNA genome replication"/>
    <property type="evidence" value="ECO:0007669"/>
    <property type="project" value="UniProtKB-UniRule"/>
</dbReference>
<dbReference type="Gene3D" id="3.90.1600.10">
    <property type="entry name" value="Palm domain of DNA polymerase"/>
    <property type="match status" value="1"/>
</dbReference>
<dbReference type="HAMAP" id="MF_04055">
    <property type="entry name" value="ADV_DPOL"/>
    <property type="match status" value="1"/>
</dbReference>
<dbReference type="InterPro" id="IPR006172">
    <property type="entry name" value="DNA-dir_DNA_pol_B"/>
</dbReference>
<dbReference type="InterPro" id="IPR014382">
    <property type="entry name" value="DNA-dir_DNA_pol_B_adenovir"/>
</dbReference>
<dbReference type="InterPro" id="IPR017964">
    <property type="entry name" value="DNA-dir_DNA_pol_B_CS"/>
</dbReference>
<dbReference type="InterPro" id="IPR004868">
    <property type="entry name" value="DNA-dir_DNA_pol_B_mt/vir"/>
</dbReference>
<dbReference type="InterPro" id="IPR043502">
    <property type="entry name" value="DNA/RNA_pol_sf"/>
</dbReference>
<dbReference type="InterPro" id="IPR023211">
    <property type="entry name" value="DNA_pol_palm_dom_sf"/>
</dbReference>
<dbReference type="InterPro" id="IPR012337">
    <property type="entry name" value="RNaseH-like_sf"/>
</dbReference>
<dbReference type="Pfam" id="PF03175">
    <property type="entry name" value="DNA_pol_B_2"/>
    <property type="match status" value="1"/>
</dbReference>
<dbReference type="PIRSF" id="PIRSF000788">
    <property type="entry name" value="DPol_ADV"/>
    <property type="match status" value="1"/>
</dbReference>
<dbReference type="SMART" id="SM00486">
    <property type="entry name" value="POLBc"/>
    <property type="match status" value="1"/>
</dbReference>
<dbReference type="SUPFAM" id="SSF56672">
    <property type="entry name" value="DNA/RNA polymerases"/>
    <property type="match status" value="1"/>
</dbReference>
<dbReference type="SUPFAM" id="SSF53098">
    <property type="entry name" value="Ribonuclease H-like"/>
    <property type="match status" value="1"/>
</dbReference>
<dbReference type="PROSITE" id="PS00116">
    <property type="entry name" value="DNA_POLYMERASE_B"/>
    <property type="match status" value="1"/>
</dbReference>
<keyword id="KW-0235">DNA replication</keyword>
<keyword id="KW-0238">DNA-binding</keyword>
<keyword id="KW-0239">DNA-directed DNA polymerase</keyword>
<keyword id="KW-1048">Host nucleus</keyword>
<keyword id="KW-0548">Nucleotidyltransferase</keyword>
<keyword id="KW-1185">Reference proteome</keyword>
<keyword id="KW-0808">Transferase</keyword>
<keyword id="KW-1194">Viral DNA replication</keyword>
<gene>
    <name evidence="1" type="primary">POL</name>
</gene>
<protein>
    <recommendedName>
        <fullName evidence="1">DNA polymerase</fullName>
        <ecNumber evidence="1">2.7.7.7</ecNumber>
    </recommendedName>
</protein>
<comment type="function">
    <text>Eukaryotic-type DNA polymerase involved in viral genomic replication. DNA synthesis is protein primed, and acts in a strand displacement replication.</text>
</comment>
<comment type="function">
    <text evidence="1">Eukaryotic-type DNA polymerase involved in viral genomic replication. DNA synthesis is protein primed, and acts in a strand displacement replication. Assembles in complex with viral pTP, DBP, host NFIA and host POU2F1/OCT1 on viral origin of replication. The polymerase covalently transfers dCMP onto pTP, thereby initiating complementary strand synthesis.</text>
</comment>
<comment type="catalytic activity">
    <reaction evidence="1">
        <text>DNA(n) + a 2'-deoxyribonucleoside 5'-triphosphate = DNA(n+1) + diphosphate</text>
        <dbReference type="Rhea" id="RHEA:22508"/>
        <dbReference type="Rhea" id="RHEA-COMP:17339"/>
        <dbReference type="Rhea" id="RHEA-COMP:17340"/>
        <dbReference type="ChEBI" id="CHEBI:33019"/>
        <dbReference type="ChEBI" id="CHEBI:61560"/>
        <dbReference type="ChEBI" id="CHEBI:173112"/>
        <dbReference type="EC" id="2.7.7.7"/>
    </reaction>
</comment>
<comment type="subunit">
    <text evidence="1">Heterodimer with the terminal protein; this heterodimer binds to bp 9 to 18 of the genome. Forms a complex with viral pTP, DBP and hosts NFIA and POU2F1/OCT1 for initiation of replication.</text>
</comment>
<comment type="subcellular location">
    <subcellularLocation>
        <location evidence="1">Host nucleus</location>
    </subcellularLocation>
</comment>
<comment type="miscellaneous">
    <text evidence="1">This DNA polymerase requires a protein as a primer.</text>
</comment>
<comment type="similarity">
    <text evidence="1 3">Belongs to the DNA polymerase type-B family.</text>
</comment>
<reference key="1">
    <citation type="journal article" date="2002" name="J. Gen. Virol.">
        <title>Genetic analysis of an adenovirus isolated from corn snake (Elaphe guttata) implies common origin with the members of the proposed new genus Atadenovirus.</title>
        <authorList>
            <person name="Farkas S.L."/>
            <person name="Benko M."/>
            <person name="Elo P.T."/>
            <person name="Ursu K."/>
            <person name="Dan A."/>
            <person name="Ahne W."/>
            <person name="Harrach B."/>
        </authorList>
    </citation>
    <scope>NUCLEOTIDE SEQUENCE [GENOMIC DNA]</scope>
</reference>
<organismHost>
    <name type="scientific">Pantherophis guttatus</name>
    <name type="common">Corn snake</name>
    <name type="synonym">Elaphe guttata</name>
    <dbReference type="NCBI Taxonomy" id="94885"/>
</organismHost>
<accession>Q8QNT0</accession>
<organism>
    <name type="scientific">Snake adenovirus serotype 1</name>
    <name type="common">SnAdV-1</name>
    <dbReference type="NCBI Taxonomy" id="189830"/>
    <lineage>
        <taxon>Viruses</taxon>
        <taxon>Varidnaviria</taxon>
        <taxon>Bamfordvirae</taxon>
        <taxon>Preplasmiviricota</taxon>
        <taxon>Tectiliviricetes</taxon>
        <taxon>Rowavirales</taxon>
        <taxon>Adenoviridae</taxon>
        <taxon>Atadenovirus</taxon>
        <taxon>Snake atadenovirus A</taxon>
    </lineage>
</organism>
<feature type="chain" id="PRO_0000425910" description="DNA polymerase">
    <location>
        <begin position="1"/>
        <end position="1085"/>
    </location>
</feature>
<feature type="region of interest" description="Disordered" evidence="2">
    <location>
        <begin position="1059"/>
        <end position="1085"/>
    </location>
</feature>
<name>DPOL_ADES1</name>